<proteinExistence type="inferred from homology"/>
<protein>
    <recommendedName>
        <fullName evidence="1">Iron-sulfur cluster assembly protein CyaY</fullName>
    </recommendedName>
</protein>
<comment type="function">
    <text evidence="1">Involved in iron-sulfur (Fe-S) cluster assembly. May act as a regulator of Fe-S biogenesis.</text>
</comment>
<comment type="similarity">
    <text evidence="1">Belongs to the frataxin family.</text>
</comment>
<organism>
    <name type="scientific">Pseudomonas paraeruginosa (strain DSM 24068 / PA7)</name>
    <name type="common">Pseudomonas aeruginosa (strain PA7)</name>
    <dbReference type="NCBI Taxonomy" id="381754"/>
    <lineage>
        <taxon>Bacteria</taxon>
        <taxon>Pseudomonadati</taxon>
        <taxon>Pseudomonadota</taxon>
        <taxon>Gammaproteobacteria</taxon>
        <taxon>Pseudomonadales</taxon>
        <taxon>Pseudomonadaceae</taxon>
        <taxon>Pseudomonas</taxon>
        <taxon>Pseudomonas paraeruginosa</taxon>
    </lineage>
</organism>
<evidence type="ECO:0000255" key="1">
    <source>
        <dbReference type="HAMAP-Rule" id="MF_00142"/>
    </source>
</evidence>
<feature type="chain" id="PRO_1000010938" description="Iron-sulfur cluster assembly protein CyaY">
    <location>
        <begin position="1"/>
        <end position="108"/>
    </location>
</feature>
<accession>A6VE49</accession>
<gene>
    <name evidence="1" type="primary">cyaY</name>
    <name type="ordered locus">PSPA7_6018</name>
</gene>
<reference key="1">
    <citation type="submission" date="2007-06" db="EMBL/GenBank/DDBJ databases">
        <authorList>
            <person name="Dodson R.J."/>
            <person name="Harkins D."/>
            <person name="Paulsen I.T."/>
        </authorList>
    </citation>
    <scope>NUCLEOTIDE SEQUENCE [LARGE SCALE GENOMIC DNA]</scope>
    <source>
        <strain>DSM 24068 / PA7</strain>
    </source>
</reference>
<name>CYAY_PSEP7</name>
<dbReference type="EMBL" id="CP000744">
    <property type="protein sequence ID" value="ABR85394.1"/>
    <property type="molecule type" value="Genomic_DNA"/>
</dbReference>
<dbReference type="RefSeq" id="WP_041025434.1">
    <property type="nucleotide sequence ID" value="NC_009656.1"/>
</dbReference>
<dbReference type="SMR" id="A6VE49"/>
<dbReference type="KEGG" id="pap:PSPA7_6018"/>
<dbReference type="HOGENOM" id="CLU_080880_3_0_6"/>
<dbReference type="Proteomes" id="UP000001582">
    <property type="component" value="Chromosome"/>
</dbReference>
<dbReference type="GO" id="GO:0005829">
    <property type="term" value="C:cytosol"/>
    <property type="evidence" value="ECO:0007669"/>
    <property type="project" value="TreeGrafter"/>
</dbReference>
<dbReference type="GO" id="GO:0008199">
    <property type="term" value="F:ferric iron binding"/>
    <property type="evidence" value="ECO:0007669"/>
    <property type="project" value="InterPro"/>
</dbReference>
<dbReference type="GO" id="GO:0008198">
    <property type="term" value="F:ferrous iron binding"/>
    <property type="evidence" value="ECO:0007669"/>
    <property type="project" value="TreeGrafter"/>
</dbReference>
<dbReference type="GO" id="GO:0016226">
    <property type="term" value="P:iron-sulfur cluster assembly"/>
    <property type="evidence" value="ECO:0007669"/>
    <property type="project" value="UniProtKB-UniRule"/>
</dbReference>
<dbReference type="CDD" id="cd00503">
    <property type="entry name" value="Frataxin"/>
    <property type="match status" value="1"/>
</dbReference>
<dbReference type="FunFam" id="3.30.920.10:FF:000017">
    <property type="entry name" value="Iron-sulfur cluster assembly protein CyaY"/>
    <property type="match status" value="1"/>
</dbReference>
<dbReference type="Gene3D" id="3.30.920.10">
    <property type="entry name" value="Frataxin/CyaY"/>
    <property type="match status" value="1"/>
</dbReference>
<dbReference type="HAMAP" id="MF_00142">
    <property type="entry name" value="CyaY"/>
    <property type="match status" value="1"/>
</dbReference>
<dbReference type="InterPro" id="IPR047584">
    <property type="entry name" value="CyaY"/>
</dbReference>
<dbReference type="InterPro" id="IPR002908">
    <property type="entry name" value="Frataxin/CyaY"/>
</dbReference>
<dbReference type="InterPro" id="IPR036524">
    <property type="entry name" value="Frataxin/CyaY_sf"/>
</dbReference>
<dbReference type="InterPro" id="IPR020895">
    <property type="entry name" value="Frataxin_CS"/>
</dbReference>
<dbReference type="NCBIfam" id="TIGR03421">
    <property type="entry name" value="FeS_CyaY"/>
    <property type="match status" value="1"/>
</dbReference>
<dbReference type="PANTHER" id="PTHR16821">
    <property type="entry name" value="FRATAXIN"/>
    <property type="match status" value="1"/>
</dbReference>
<dbReference type="PANTHER" id="PTHR16821:SF2">
    <property type="entry name" value="FRATAXIN, MITOCHONDRIAL"/>
    <property type="match status" value="1"/>
</dbReference>
<dbReference type="Pfam" id="PF01491">
    <property type="entry name" value="Frataxin_Cyay"/>
    <property type="match status" value="1"/>
</dbReference>
<dbReference type="SMART" id="SM01219">
    <property type="entry name" value="Frataxin_Cyay"/>
    <property type="match status" value="1"/>
</dbReference>
<dbReference type="SUPFAM" id="SSF55387">
    <property type="entry name" value="Frataxin/Nqo15-like"/>
    <property type="match status" value="1"/>
</dbReference>
<dbReference type="PROSITE" id="PS01344">
    <property type="entry name" value="FRATAXIN_1"/>
    <property type="match status" value="1"/>
</dbReference>
<dbReference type="PROSITE" id="PS50810">
    <property type="entry name" value="FRATAXIN_2"/>
    <property type="match status" value="1"/>
</dbReference>
<keyword id="KW-0408">Iron</keyword>
<keyword id="KW-0479">Metal-binding</keyword>
<sequence>MNEVRFHDLVDAVQQQVEDAFDDSGLDLDLENAGGVLTVRFENGSQLILSRQAPLYQLWVAAKSGGFHFDYDETSGLWRHDASREPLGALLNRATLEQGGEDVEFPGL</sequence>